<feature type="chain" id="PRO_0000208080" description="Acyltransferase MdmB">
    <location>
        <begin position="1"/>
        <end position="387"/>
    </location>
</feature>
<feature type="transmembrane region" description="Helical" evidence="1">
    <location>
        <begin position="8"/>
        <end position="28"/>
    </location>
</feature>
<feature type="transmembrane region" description="Helical" evidence="1">
    <location>
        <begin position="45"/>
        <end position="65"/>
    </location>
</feature>
<feature type="transmembrane region" description="Helical" evidence="1">
    <location>
        <begin position="85"/>
        <end position="105"/>
    </location>
</feature>
<feature type="transmembrane region" description="Helical" evidence="1">
    <location>
        <begin position="139"/>
        <end position="161"/>
    </location>
</feature>
<feature type="transmembrane region" description="Helical" evidence="1">
    <location>
        <begin position="170"/>
        <end position="190"/>
    </location>
</feature>
<feature type="transmembrane region" description="Helical" evidence="1">
    <location>
        <begin position="209"/>
        <end position="229"/>
    </location>
</feature>
<feature type="transmembrane region" description="Helical" evidence="1">
    <location>
        <begin position="236"/>
        <end position="256"/>
    </location>
</feature>
<feature type="transmembrane region" description="Helical" evidence="1">
    <location>
        <begin position="258"/>
        <end position="278"/>
    </location>
</feature>
<feature type="transmembrane region" description="Helical" evidence="1">
    <location>
        <begin position="292"/>
        <end position="312"/>
    </location>
</feature>
<feature type="transmembrane region" description="Helical" evidence="1">
    <location>
        <begin position="336"/>
        <end position="356"/>
    </location>
</feature>
<reference key="1">
    <citation type="journal article" date="1992" name="J. Bacteriol.">
        <title>A macrolide 3-O-acyltransferase gene from the midecamycin-producing species Streptomyces mycarofaciens.</title>
        <authorList>
            <person name="Hara O."/>
            <person name="Hutchinson C.R."/>
        </authorList>
    </citation>
    <scope>NUCLEOTIDE SEQUENCE [GENOMIC DNA]</scope>
    <source>
        <strain>ATCC 21454 / JCM 4939 / NBRC 13792</strain>
    </source>
</reference>
<evidence type="ECO:0000255" key="1"/>
<evidence type="ECO:0000305" key="2"/>
<accession>Q00718</accession>
<gene>
    <name type="primary">mdmB</name>
</gene>
<proteinExistence type="inferred from homology"/>
<protein>
    <recommendedName>
        <fullName>Acyltransferase MdmB</fullName>
        <ecNumber>2.3.1.-</ecNumber>
    </recommendedName>
</protein>
<dbReference type="EC" id="2.3.1.-"/>
<dbReference type="EMBL" id="M93958">
    <property type="protein sequence ID" value="AAA26781.1"/>
    <property type="molecule type" value="Genomic_DNA"/>
</dbReference>
<dbReference type="PIR" id="A42719">
    <property type="entry name" value="A42719"/>
</dbReference>
<dbReference type="GO" id="GO:0005886">
    <property type="term" value="C:plasma membrane"/>
    <property type="evidence" value="ECO:0007669"/>
    <property type="project" value="UniProtKB-SubCell"/>
</dbReference>
<dbReference type="GO" id="GO:0016747">
    <property type="term" value="F:acyltransferase activity, transferring groups other than amino-acyl groups"/>
    <property type="evidence" value="ECO:0007669"/>
    <property type="project" value="InterPro"/>
</dbReference>
<dbReference type="GO" id="GO:0017000">
    <property type="term" value="P:antibiotic biosynthetic process"/>
    <property type="evidence" value="ECO:0007669"/>
    <property type="project" value="UniProtKB-KW"/>
</dbReference>
<dbReference type="GO" id="GO:0009103">
    <property type="term" value="P:lipopolysaccharide biosynthetic process"/>
    <property type="evidence" value="ECO:0007669"/>
    <property type="project" value="TreeGrafter"/>
</dbReference>
<dbReference type="InterPro" id="IPR002656">
    <property type="entry name" value="Acyl_transf_3_dom"/>
</dbReference>
<dbReference type="InterPro" id="IPR050879">
    <property type="entry name" value="Acyltransferase_3"/>
</dbReference>
<dbReference type="PANTHER" id="PTHR23028">
    <property type="entry name" value="ACETYLTRANSFERASE"/>
    <property type="match status" value="1"/>
</dbReference>
<dbReference type="PANTHER" id="PTHR23028:SF53">
    <property type="entry name" value="ACYL_TRANSF_3 DOMAIN-CONTAINING PROTEIN"/>
    <property type="match status" value="1"/>
</dbReference>
<dbReference type="Pfam" id="PF01757">
    <property type="entry name" value="Acyl_transf_3"/>
    <property type="match status" value="1"/>
</dbReference>
<keyword id="KW-0012">Acyltransferase</keyword>
<keyword id="KW-0045">Antibiotic biosynthesis</keyword>
<keyword id="KW-1003">Cell membrane</keyword>
<keyword id="KW-0472">Membrane</keyword>
<keyword id="KW-0808">Transferase</keyword>
<keyword id="KW-0812">Transmembrane</keyword>
<keyword id="KW-1133">Transmembrane helix</keyword>
<organism>
    <name type="scientific">Streptomyces mycarofaciens</name>
    <dbReference type="NCBI Taxonomy" id="1949"/>
    <lineage>
        <taxon>Bacteria</taxon>
        <taxon>Bacillati</taxon>
        <taxon>Actinomycetota</taxon>
        <taxon>Actinomycetes</taxon>
        <taxon>Kitasatosporales</taxon>
        <taxon>Streptomycetaceae</taxon>
        <taxon>Streptomyces</taxon>
    </lineage>
</organism>
<sequence length="387" mass="42172">MPPRVVRLPSLTGLRWFAALAVFACHIAQQQFFADQQVGTALLHITTLGSIAVSVFFLLSGFVLAWSARDKDSVTTFWRRRFAKIYPLHLVTFLIAGVIIFSLAEPTLPGGSVWDGLVPDLLLVQSWLPEPTIIAGFNTPSWSLSCEFAFYLTFPLWYRLVRKIPVRRLWWCAAGIAAAVICVPFVTSQFPASAETAPGMPLNELWFACWLPPVRMLEFVLGIVMALILRTGVWRGPGVVSSALLLAAAYGVTQVVPPMFTIAACSIVPAALLITALANADVQGLRTGLRSAVLVRLGEWSFAFYLVHFMVIRYGHRLMGGELGYARQWSTASAGALALAMLAVAIVAGGLLHTVVENPCMRLLGRRRPVATAPDPATDEAPKLTRA</sequence>
<name>MDMB_STRMY</name>
<comment type="function">
    <text>Catalyzes the acylation of the mycaminose sugar during midecamycin biosynthesis.</text>
</comment>
<comment type="subcellular location">
    <subcellularLocation>
        <location evidence="2">Cell membrane</location>
        <topology evidence="2">Multi-pass membrane protein</topology>
    </subcellularLocation>
</comment>
<comment type="similarity">
    <text evidence="2">Belongs to the acyltransferase 3 family.</text>
</comment>